<protein>
    <recommendedName>
        <fullName evidence="1">Large ribosomal subunit protein uL2</fullName>
    </recommendedName>
    <alternativeName>
        <fullName evidence="3">50S ribosomal protein L2</fullName>
    </alternativeName>
</protein>
<sequence>MAVIKCKPTSPGRRHVVKVVNSDLHKGKPFAGLLAKKSKSGGRNNTGRITVRHVGGGHKQHYRLIDFKRDKDGIPAKIERLEYDPNRTAHIALVLYADGERRYILAAKGMQAGDKIQSGVEAEIKTGNAMPLRNIPVGSVVHAVEMKPGKGAQIARSAGAYVQVVARDGAYATLRLRSGEMRKVPVDCRATFGEVGNAEHMLRQLGKAGAKRWRGVRPTVRGVAMNPVDHPHGGGEGRTSGGRHPVTPWGVPTKGYKTRSNKRTDKYIVRRRNK</sequence>
<keyword id="KW-0687">Ribonucleoprotein</keyword>
<keyword id="KW-0689">Ribosomal protein</keyword>
<keyword id="KW-0694">RNA-binding</keyword>
<keyword id="KW-0699">rRNA-binding</keyword>
<accession>Q0I0A2</accession>
<proteinExistence type="inferred from homology"/>
<organism>
    <name type="scientific">Shewanella sp. (strain MR-7)</name>
    <dbReference type="NCBI Taxonomy" id="60481"/>
    <lineage>
        <taxon>Bacteria</taxon>
        <taxon>Pseudomonadati</taxon>
        <taxon>Pseudomonadota</taxon>
        <taxon>Gammaproteobacteria</taxon>
        <taxon>Alteromonadales</taxon>
        <taxon>Shewanellaceae</taxon>
        <taxon>Shewanella</taxon>
    </lineage>
</organism>
<feature type="chain" id="PRO_0000310014" description="Large ribosomal subunit protein uL2">
    <location>
        <begin position="1"/>
        <end position="274"/>
    </location>
</feature>
<feature type="region of interest" description="Disordered" evidence="2">
    <location>
        <begin position="223"/>
        <end position="274"/>
    </location>
</feature>
<evidence type="ECO:0000255" key="1">
    <source>
        <dbReference type="HAMAP-Rule" id="MF_01320"/>
    </source>
</evidence>
<evidence type="ECO:0000256" key="2">
    <source>
        <dbReference type="SAM" id="MobiDB-lite"/>
    </source>
</evidence>
<evidence type="ECO:0000305" key="3"/>
<gene>
    <name evidence="1" type="primary">rplB</name>
    <name type="ordered locus">Shewmr7_0197</name>
</gene>
<comment type="function">
    <text evidence="1">One of the primary rRNA binding proteins. Required for association of the 30S and 50S subunits to form the 70S ribosome, for tRNA binding and peptide bond formation. It has been suggested to have peptidyltransferase activity; this is somewhat controversial. Makes several contacts with the 16S rRNA in the 70S ribosome.</text>
</comment>
<comment type="subunit">
    <text evidence="1">Part of the 50S ribosomal subunit. Forms a bridge to the 30S subunit in the 70S ribosome.</text>
</comment>
<comment type="similarity">
    <text evidence="1">Belongs to the universal ribosomal protein uL2 family.</text>
</comment>
<reference key="1">
    <citation type="submission" date="2006-08" db="EMBL/GenBank/DDBJ databases">
        <title>Complete sequence of chromosome 1 of Shewanella sp. MR-7.</title>
        <authorList>
            <person name="Copeland A."/>
            <person name="Lucas S."/>
            <person name="Lapidus A."/>
            <person name="Barry K."/>
            <person name="Detter J.C."/>
            <person name="Glavina del Rio T."/>
            <person name="Hammon N."/>
            <person name="Israni S."/>
            <person name="Dalin E."/>
            <person name="Tice H."/>
            <person name="Pitluck S."/>
            <person name="Kiss H."/>
            <person name="Brettin T."/>
            <person name="Bruce D."/>
            <person name="Han C."/>
            <person name="Tapia R."/>
            <person name="Gilna P."/>
            <person name="Schmutz J."/>
            <person name="Larimer F."/>
            <person name="Land M."/>
            <person name="Hauser L."/>
            <person name="Kyrpides N."/>
            <person name="Mikhailova N."/>
            <person name="Nealson K."/>
            <person name="Konstantinidis K."/>
            <person name="Klappenbach J."/>
            <person name="Tiedje J."/>
            <person name="Richardson P."/>
        </authorList>
    </citation>
    <scope>NUCLEOTIDE SEQUENCE [LARGE SCALE GENOMIC DNA]</scope>
    <source>
        <strain>MR-7</strain>
    </source>
</reference>
<name>RL2_SHESR</name>
<dbReference type="EMBL" id="CP000444">
    <property type="protein sequence ID" value="ABI41203.1"/>
    <property type="molecule type" value="Genomic_DNA"/>
</dbReference>
<dbReference type="SMR" id="Q0I0A2"/>
<dbReference type="KEGG" id="shm:Shewmr7_0197"/>
<dbReference type="HOGENOM" id="CLU_036235_2_1_6"/>
<dbReference type="GO" id="GO:0015934">
    <property type="term" value="C:large ribosomal subunit"/>
    <property type="evidence" value="ECO:0007669"/>
    <property type="project" value="InterPro"/>
</dbReference>
<dbReference type="GO" id="GO:0019843">
    <property type="term" value="F:rRNA binding"/>
    <property type="evidence" value="ECO:0007669"/>
    <property type="project" value="UniProtKB-UniRule"/>
</dbReference>
<dbReference type="GO" id="GO:0003735">
    <property type="term" value="F:structural constituent of ribosome"/>
    <property type="evidence" value="ECO:0007669"/>
    <property type="project" value="InterPro"/>
</dbReference>
<dbReference type="GO" id="GO:0016740">
    <property type="term" value="F:transferase activity"/>
    <property type="evidence" value="ECO:0007669"/>
    <property type="project" value="InterPro"/>
</dbReference>
<dbReference type="GO" id="GO:0002181">
    <property type="term" value="P:cytoplasmic translation"/>
    <property type="evidence" value="ECO:0007669"/>
    <property type="project" value="TreeGrafter"/>
</dbReference>
<dbReference type="FunFam" id="2.30.30.30:FF:000001">
    <property type="entry name" value="50S ribosomal protein L2"/>
    <property type="match status" value="1"/>
</dbReference>
<dbReference type="FunFam" id="2.40.50.140:FF:000003">
    <property type="entry name" value="50S ribosomal protein L2"/>
    <property type="match status" value="1"/>
</dbReference>
<dbReference type="FunFam" id="4.10.950.10:FF:000001">
    <property type="entry name" value="50S ribosomal protein L2"/>
    <property type="match status" value="1"/>
</dbReference>
<dbReference type="Gene3D" id="2.30.30.30">
    <property type="match status" value="1"/>
</dbReference>
<dbReference type="Gene3D" id="2.40.50.140">
    <property type="entry name" value="Nucleic acid-binding proteins"/>
    <property type="match status" value="1"/>
</dbReference>
<dbReference type="Gene3D" id="4.10.950.10">
    <property type="entry name" value="Ribosomal protein L2, domain 3"/>
    <property type="match status" value="1"/>
</dbReference>
<dbReference type="HAMAP" id="MF_01320_B">
    <property type="entry name" value="Ribosomal_uL2_B"/>
    <property type="match status" value="1"/>
</dbReference>
<dbReference type="InterPro" id="IPR012340">
    <property type="entry name" value="NA-bd_OB-fold"/>
</dbReference>
<dbReference type="InterPro" id="IPR014722">
    <property type="entry name" value="Rib_uL2_dom2"/>
</dbReference>
<dbReference type="InterPro" id="IPR002171">
    <property type="entry name" value="Ribosomal_uL2"/>
</dbReference>
<dbReference type="InterPro" id="IPR005880">
    <property type="entry name" value="Ribosomal_uL2_bac/org-type"/>
</dbReference>
<dbReference type="InterPro" id="IPR022669">
    <property type="entry name" value="Ribosomal_uL2_C"/>
</dbReference>
<dbReference type="InterPro" id="IPR022671">
    <property type="entry name" value="Ribosomal_uL2_CS"/>
</dbReference>
<dbReference type="InterPro" id="IPR014726">
    <property type="entry name" value="Ribosomal_uL2_dom3"/>
</dbReference>
<dbReference type="InterPro" id="IPR022666">
    <property type="entry name" value="Ribosomal_uL2_RNA-bd_dom"/>
</dbReference>
<dbReference type="InterPro" id="IPR008991">
    <property type="entry name" value="Translation_prot_SH3-like_sf"/>
</dbReference>
<dbReference type="NCBIfam" id="TIGR01171">
    <property type="entry name" value="rplB_bact"/>
    <property type="match status" value="1"/>
</dbReference>
<dbReference type="PANTHER" id="PTHR13691:SF5">
    <property type="entry name" value="LARGE RIBOSOMAL SUBUNIT PROTEIN UL2M"/>
    <property type="match status" value="1"/>
</dbReference>
<dbReference type="PANTHER" id="PTHR13691">
    <property type="entry name" value="RIBOSOMAL PROTEIN L2"/>
    <property type="match status" value="1"/>
</dbReference>
<dbReference type="Pfam" id="PF00181">
    <property type="entry name" value="Ribosomal_L2"/>
    <property type="match status" value="1"/>
</dbReference>
<dbReference type="Pfam" id="PF03947">
    <property type="entry name" value="Ribosomal_L2_C"/>
    <property type="match status" value="1"/>
</dbReference>
<dbReference type="PIRSF" id="PIRSF002158">
    <property type="entry name" value="Ribosomal_L2"/>
    <property type="match status" value="1"/>
</dbReference>
<dbReference type="SMART" id="SM01383">
    <property type="entry name" value="Ribosomal_L2"/>
    <property type="match status" value="1"/>
</dbReference>
<dbReference type="SMART" id="SM01382">
    <property type="entry name" value="Ribosomal_L2_C"/>
    <property type="match status" value="1"/>
</dbReference>
<dbReference type="SUPFAM" id="SSF50249">
    <property type="entry name" value="Nucleic acid-binding proteins"/>
    <property type="match status" value="1"/>
</dbReference>
<dbReference type="SUPFAM" id="SSF50104">
    <property type="entry name" value="Translation proteins SH3-like domain"/>
    <property type="match status" value="1"/>
</dbReference>
<dbReference type="PROSITE" id="PS00467">
    <property type="entry name" value="RIBOSOMAL_L2"/>
    <property type="match status" value="1"/>
</dbReference>